<gene>
    <name type="primary">phnU</name>
    <name type="ordered locus">SPA2296</name>
</gene>
<comment type="function">
    <text evidence="1">Probably part of the PhnSTUV complex (TC 3.A.1.11.5) involved in 2-aminoethylphosphonate import. Probably responsible for the translocation of the substrate across the membrane (By similarity).</text>
</comment>
<comment type="subcellular location">
    <subcellularLocation>
        <location evidence="3">Cell inner membrane</location>
        <topology evidence="2">Multi-pass membrane protein</topology>
    </subcellularLocation>
</comment>
<comment type="similarity">
    <text evidence="3">Belongs to the binding-protein-dependent transport system permease family.</text>
</comment>
<feature type="chain" id="PRO_0000286744" description="Putative 2-aminoethylphosphonate transport system permease protein PhnU">
    <location>
        <begin position="1"/>
        <end position="289"/>
    </location>
</feature>
<feature type="transmembrane region" description="Helical" evidence="2">
    <location>
        <begin position="19"/>
        <end position="39"/>
    </location>
</feature>
<feature type="transmembrane region" description="Helical" evidence="2">
    <location>
        <begin position="76"/>
        <end position="96"/>
    </location>
</feature>
<feature type="transmembrane region" description="Helical" evidence="2">
    <location>
        <begin position="111"/>
        <end position="131"/>
    </location>
</feature>
<feature type="transmembrane region" description="Helical" evidence="2">
    <location>
        <begin position="150"/>
        <end position="170"/>
    </location>
</feature>
<feature type="transmembrane region" description="Helical" evidence="2">
    <location>
        <begin position="202"/>
        <end position="222"/>
    </location>
</feature>
<feature type="transmembrane region" description="Helical" evidence="2">
    <location>
        <begin position="254"/>
        <end position="274"/>
    </location>
</feature>
<feature type="domain" description="ABC transmembrane type-1" evidence="2">
    <location>
        <begin position="68"/>
        <end position="275"/>
    </location>
</feature>
<sequence length="289" mass="31190">MSLILPLEKPALNLRPLLWLLLPLLVLATLFFWPLSLIVEQALRGANGEIGLETFRQVVDSKRFVGALLNTLQIAFFATAGCLLLGSVMSLILVFIPFPGSELIGRVVDTFIALPTFLITLAFTFIYGSAGLLNGALMSLFAFELPPVDFLYSMQGVILAEITVFTPLVMRPLMAALRQIDKSQLEAASILGAHPLRVIGQVIFPAALPALMAGGSLCLLLTTNEFGIVLFIGAKGVNTLPMMVYSKAILESDYTVACMIALINIVLSLGLFSLYRLAASRTGVRSQPC</sequence>
<reference key="1">
    <citation type="journal article" date="2004" name="Nat. Genet.">
        <title>Comparison of genome degradation in Paratyphi A and Typhi, human-restricted serovars of Salmonella enterica that cause typhoid.</title>
        <authorList>
            <person name="McClelland M."/>
            <person name="Sanderson K.E."/>
            <person name="Clifton S.W."/>
            <person name="Latreille P."/>
            <person name="Porwollik S."/>
            <person name="Sabo A."/>
            <person name="Meyer R."/>
            <person name="Bieri T."/>
            <person name="Ozersky P."/>
            <person name="McLellan M."/>
            <person name="Harkins C.R."/>
            <person name="Wang C."/>
            <person name="Nguyen C."/>
            <person name="Berghoff A."/>
            <person name="Elliott G."/>
            <person name="Kohlberg S."/>
            <person name="Strong C."/>
            <person name="Du F."/>
            <person name="Carter J."/>
            <person name="Kremizki C."/>
            <person name="Layman D."/>
            <person name="Leonard S."/>
            <person name="Sun H."/>
            <person name="Fulton L."/>
            <person name="Nash W."/>
            <person name="Miner T."/>
            <person name="Minx P."/>
            <person name="Delehaunty K."/>
            <person name="Fronick C."/>
            <person name="Magrini V."/>
            <person name="Nhan M."/>
            <person name="Warren W."/>
            <person name="Florea L."/>
            <person name="Spieth J."/>
            <person name="Wilson R.K."/>
        </authorList>
    </citation>
    <scope>NUCLEOTIDE SEQUENCE [LARGE SCALE GENOMIC DNA]</scope>
    <source>
        <strain>ATCC 9150 / SARB42</strain>
    </source>
</reference>
<name>PHNU_SALPA</name>
<organism>
    <name type="scientific">Salmonella paratyphi A (strain ATCC 9150 / SARB42)</name>
    <dbReference type="NCBI Taxonomy" id="295319"/>
    <lineage>
        <taxon>Bacteria</taxon>
        <taxon>Pseudomonadati</taxon>
        <taxon>Pseudomonadota</taxon>
        <taxon>Gammaproteobacteria</taxon>
        <taxon>Enterobacterales</taxon>
        <taxon>Enterobacteriaceae</taxon>
        <taxon>Salmonella</taxon>
    </lineage>
</organism>
<accession>Q5PFQ6</accession>
<proteinExistence type="inferred from homology"/>
<keyword id="KW-0997">Cell inner membrane</keyword>
<keyword id="KW-1003">Cell membrane</keyword>
<keyword id="KW-0472">Membrane</keyword>
<keyword id="KW-0812">Transmembrane</keyword>
<keyword id="KW-1133">Transmembrane helix</keyword>
<keyword id="KW-0813">Transport</keyword>
<dbReference type="EMBL" id="CP000026">
    <property type="protein sequence ID" value="AAV78181.1"/>
    <property type="molecule type" value="Genomic_DNA"/>
</dbReference>
<dbReference type="RefSeq" id="WP_000052714.1">
    <property type="nucleotide sequence ID" value="NC_006511.1"/>
</dbReference>
<dbReference type="SMR" id="Q5PFQ6"/>
<dbReference type="KEGG" id="spt:SPA2296"/>
<dbReference type="HOGENOM" id="CLU_016047_18_0_6"/>
<dbReference type="Proteomes" id="UP000008185">
    <property type="component" value="Chromosome"/>
</dbReference>
<dbReference type="GO" id="GO:0005886">
    <property type="term" value="C:plasma membrane"/>
    <property type="evidence" value="ECO:0007669"/>
    <property type="project" value="UniProtKB-SubCell"/>
</dbReference>
<dbReference type="GO" id="GO:0033223">
    <property type="term" value="P:2-aminoethylphosphonate transport"/>
    <property type="evidence" value="ECO:0007669"/>
    <property type="project" value="InterPro"/>
</dbReference>
<dbReference type="GO" id="GO:0055085">
    <property type="term" value="P:transmembrane transport"/>
    <property type="evidence" value="ECO:0007669"/>
    <property type="project" value="InterPro"/>
</dbReference>
<dbReference type="CDD" id="cd06261">
    <property type="entry name" value="TM_PBP2"/>
    <property type="match status" value="1"/>
</dbReference>
<dbReference type="Gene3D" id="1.10.3720.10">
    <property type="entry name" value="MetI-like"/>
    <property type="match status" value="1"/>
</dbReference>
<dbReference type="InterPro" id="IPR017636">
    <property type="entry name" value="AminoethylPonate_ABC_perm-PhnU"/>
</dbReference>
<dbReference type="InterPro" id="IPR000515">
    <property type="entry name" value="MetI-like"/>
</dbReference>
<dbReference type="InterPro" id="IPR035906">
    <property type="entry name" value="MetI-like_sf"/>
</dbReference>
<dbReference type="NCBIfam" id="TIGR03226">
    <property type="entry name" value="PhnU"/>
    <property type="match status" value="1"/>
</dbReference>
<dbReference type="NCBIfam" id="NF011624">
    <property type="entry name" value="PRK15050.1"/>
    <property type="match status" value="1"/>
</dbReference>
<dbReference type="PANTHER" id="PTHR43357">
    <property type="entry name" value="INNER MEMBRANE ABC TRANSPORTER PERMEASE PROTEIN YDCV"/>
    <property type="match status" value="1"/>
</dbReference>
<dbReference type="PANTHER" id="PTHR43357:SF4">
    <property type="entry name" value="INNER MEMBRANE ABC TRANSPORTER PERMEASE PROTEIN YDCV"/>
    <property type="match status" value="1"/>
</dbReference>
<dbReference type="Pfam" id="PF00528">
    <property type="entry name" value="BPD_transp_1"/>
    <property type="match status" value="1"/>
</dbReference>
<dbReference type="SUPFAM" id="SSF161098">
    <property type="entry name" value="MetI-like"/>
    <property type="match status" value="1"/>
</dbReference>
<dbReference type="PROSITE" id="PS50928">
    <property type="entry name" value="ABC_TM1"/>
    <property type="match status" value="1"/>
</dbReference>
<evidence type="ECO:0000250" key="1"/>
<evidence type="ECO:0000255" key="2">
    <source>
        <dbReference type="PROSITE-ProRule" id="PRU00441"/>
    </source>
</evidence>
<evidence type="ECO:0000305" key="3"/>
<protein>
    <recommendedName>
        <fullName>Putative 2-aminoethylphosphonate transport system permease protein PhnU</fullName>
    </recommendedName>
</protein>